<evidence type="ECO:0000255" key="1">
    <source>
        <dbReference type="HAMAP-Rule" id="MF_04068"/>
    </source>
</evidence>
<keyword id="KW-0025">Alternative splicing</keyword>
<keyword id="KW-1048">Host nucleus</keyword>
<keyword id="KW-0472">Membrane</keyword>
<keyword id="KW-0694">RNA-binding</keyword>
<keyword id="KW-0468">Viral matrix protein</keyword>
<keyword id="KW-0946">Virion</keyword>
<protein>
    <recommendedName>
        <fullName evidence="1">Matrix protein 1</fullName>
        <shortName evidence="1">M1</shortName>
    </recommendedName>
</protein>
<accession>Q67167</accession>
<accession>Q0A478</accession>
<gene>
    <name evidence="1" type="primary">M</name>
</gene>
<proteinExistence type="inferred from homology"/>
<dbReference type="EMBL" id="M63537">
    <property type="protein sequence ID" value="AAA43286.1"/>
    <property type="molecule type" value="Genomic_RNA"/>
</dbReference>
<dbReference type="EMBL" id="CY014649">
    <property type="protein sequence ID" value="ABI84505.1"/>
    <property type="molecule type" value="Genomic_RNA"/>
</dbReference>
<dbReference type="SMR" id="Q67167"/>
<dbReference type="Proteomes" id="UP000008434">
    <property type="component" value="Genome"/>
</dbReference>
<dbReference type="Proteomes" id="UP000108613">
    <property type="component" value="Genome"/>
</dbReference>
<dbReference type="GO" id="GO:0042025">
    <property type="term" value="C:host cell nucleus"/>
    <property type="evidence" value="ECO:0007669"/>
    <property type="project" value="UniProtKB-SubCell"/>
</dbReference>
<dbReference type="GO" id="GO:0016020">
    <property type="term" value="C:membrane"/>
    <property type="evidence" value="ECO:0007669"/>
    <property type="project" value="UniProtKB-KW"/>
</dbReference>
<dbReference type="GO" id="GO:0055036">
    <property type="term" value="C:virion membrane"/>
    <property type="evidence" value="ECO:0007669"/>
    <property type="project" value="UniProtKB-SubCell"/>
</dbReference>
<dbReference type="GO" id="GO:0003723">
    <property type="term" value="F:RNA binding"/>
    <property type="evidence" value="ECO:0007669"/>
    <property type="project" value="UniProtKB-UniRule"/>
</dbReference>
<dbReference type="GO" id="GO:0039660">
    <property type="term" value="F:structural constituent of virion"/>
    <property type="evidence" value="ECO:0007669"/>
    <property type="project" value="UniProtKB-UniRule"/>
</dbReference>
<dbReference type="GO" id="GO:0046761">
    <property type="term" value="P:viral budding from plasma membrane"/>
    <property type="evidence" value="ECO:0007669"/>
    <property type="project" value="UniProtKB-UniRule"/>
</dbReference>
<dbReference type="FunFam" id="1.10.10.180:FF:000001">
    <property type="entry name" value="Matrix protein 1"/>
    <property type="match status" value="1"/>
</dbReference>
<dbReference type="FunFam" id="1.20.91.10:FF:000001">
    <property type="entry name" value="Matrix protein 1"/>
    <property type="match status" value="1"/>
</dbReference>
<dbReference type="Gene3D" id="1.10.10.180">
    <property type="match status" value="1"/>
</dbReference>
<dbReference type="Gene3D" id="1.20.91.10">
    <property type="match status" value="1"/>
</dbReference>
<dbReference type="HAMAP" id="MF_04068">
    <property type="entry name" value="INFV_M1"/>
    <property type="match status" value="1"/>
</dbReference>
<dbReference type="InterPro" id="IPR036039">
    <property type="entry name" value="Flu_matrix_M1"/>
</dbReference>
<dbReference type="InterPro" id="IPR013188">
    <property type="entry name" value="Flu_matrix_M1_C"/>
</dbReference>
<dbReference type="InterPro" id="IPR001561">
    <property type="entry name" value="Flu_matrix_M1_N"/>
</dbReference>
<dbReference type="InterPro" id="IPR015423">
    <property type="entry name" value="Flu_matrix_M1_N_sub1"/>
</dbReference>
<dbReference type="InterPro" id="IPR015799">
    <property type="entry name" value="Flu_matrix_M1_N_sub2"/>
</dbReference>
<dbReference type="InterPro" id="IPR037533">
    <property type="entry name" value="INFV_M1"/>
</dbReference>
<dbReference type="Pfam" id="PF00598">
    <property type="entry name" value="Flu_M1"/>
    <property type="match status" value="1"/>
</dbReference>
<dbReference type="Pfam" id="PF08289">
    <property type="entry name" value="Flu_M1_C"/>
    <property type="match status" value="1"/>
</dbReference>
<dbReference type="SMART" id="SM00759">
    <property type="entry name" value="Flu_M1_C"/>
    <property type="match status" value="1"/>
</dbReference>
<dbReference type="SUPFAM" id="SSF48145">
    <property type="entry name" value="Influenza virus matrix protein M1"/>
    <property type="match status" value="1"/>
</dbReference>
<organismHost>
    <name type="scientific">Aves</name>
    <dbReference type="NCBI Taxonomy" id="8782"/>
</organismHost>
<organismHost>
    <name type="scientific">Sus scrofa</name>
    <name type="common">Pig</name>
    <dbReference type="NCBI Taxonomy" id="9823"/>
</organismHost>
<reference key="1">
    <citation type="journal article" date="1991" name="J. Virol.">
        <title>Evolutionary analysis of the influenza A virus M gene with comparison of the M1 and M2 proteins.</title>
        <authorList>
            <person name="Ito T."/>
            <person name="Gorman O.T."/>
            <person name="Kawaoka Y."/>
            <person name="Bean W.J."/>
            <person name="Webster R.G."/>
        </authorList>
    </citation>
    <scope>NUCLEOTIDE SEQUENCE [GENOMIC RNA]</scope>
</reference>
<reference key="2">
    <citation type="journal article" date="2006" name="Science">
        <title>Large-scale sequence analysis of avian influenza isolates.</title>
        <authorList>
            <person name="Obenauer J.C."/>
            <person name="Denson J."/>
            <person name="Mehta P.K."/>
            <person name="Su X."/>
            <person name="Mukatira S."/>
            <person name="Finkelstein D.B."/>
            <person name="Xu X."/>
            <person name="Wang J."/>
            <person name="Ma J."/>
            <person name="Fan Y."/>
            <person name="Rakestraw K.M."/>
            <person name="Webster R.G."/>
            <person name="Hoffmann E."/>
            <person name="Krauss S."/>
            <person name="Zheng J."/>
            <person name="Zhang Z."/>
            <person name="Naeve C.W."/>
        </authorList>
    </citation>
    <scope>NUCLEOTIDE SEQUENCE [GENOMIC RNA]</scope>
</reference>
<sequence length="252" mass="27963">MSLLTEVETYVLSIVPSGPLKAEIAQRLEDVFAGKNTDLEALMEWLKTRPILSPLTKGILGFVFTLTVTSERGLQRRRFVQNALNGNGDPNNMDRAVKLYRKLKREITFHGAKEVALSYSTGALASCMGLIYNRMGTVTTEVAFGLVCATCEQIADSQHRSHRQIVTTTNPLIRHENRMVLASTTAKAMEQMAGSSEQAAERMEVASQARQMVQAMRTIGTHPSSSAGLKDDLLENLQAYQKRMGVQIQRFK</sequence>
<organism>
    <name type="scientific">Influenza A virus (strain A/Duck/Czechoslovakia/1956 H4N6)</name>
    <dbReference type="NCBI Taxonomy" id="385590"/>
    <lineage>
        <taxon>Viruses</taxon>
        <taxon>Riboviria</taxon>
        <taxon>Orthornavirae</taxon>
        <taxon>Negarnaviricota</taxon>
        <taxon>Polyploviricotina</taxon>
        <taxon>Insthoviricetes</taxon>
        <taxon>Articulavirales</taxon>
        <taxon>Orthomyxoviridae</taxon>
        <taxon>Alphainfluenzavirus</taxon>
        <taxon>Alphainfluenzavirus influenzae</taxon>
        <taxon>Influenza A virus</taxon>
    </lineage>
</organism>
<feature type="chain" id="PRO_0000326279" description="Matrix protein 1">
    <location>
        <begin position="1"/>
        <end position="252"/>
    </location>
</feature>
<feature type="region of interest" description="Membrane-binding" evidence="1">
    <location>
        <begin position="1"/>
        <end position="164"/>
    </location>
</feature>
<feature type="region of interest" description="RNP-binding" evidence="1">
    <location>
        <begin position="165"/>
        <end position="252"/>
    </location>
</feature>
<feature type="short sequence motif" description="Nuclear localization signal" evidence="1">
    <location>
        <begin position="101"/>
        <end position="105"/>
    </location>
</feature>
<comment type="function">
    <text evidence="1">Plays critical roles in virus replication, from virus entry and uncoating to assembly and budding of the virus particle. M1 binding to ribonucleocapsids (RNPs) in nucleus seems to inhibit viral transcription. Interaction of viral NEP with M1-RNP is thought to promote nuclear export of the complex, which is targeted to the virion assembly site at the apical plasma membrane in polarized epithelial cells. Interactions with NA and HA may bring M1, a non-raft-associated protein, into lipid rafts. Forms a continuous shell on the inner side of the lipid bilayer in virion, where it binds the RNP. During virus entry into cell, the M2 ion channel acidifies the internal virion core, inducing M1 dissociation from the RNP. M1-free RNPs are transported to the nucleus, where viral transcription and replication can take place.</text>
</comment>
<comment type="function">
    <text evidence="1">Determines the virion's shape: spherical or filamentous. Clinical isolates of influenza are characterized by the presence of significant proportion of filamentous virions, whereas after multiple passage on eggs or cell culture, virions have only spherical morphology. Filamentous virions are thought to be important to infect neighboring cells, and spherical virions more suited to spread through aerosol between hosts organisms.</text>
</comment>
<comment type="subunit">
    <text evidence="1">Homodimer and homomultimer. Interacts with NEP. Binds ribonucleocapsid by both interacting with genomic RNA and NP protein. May interact with HA and NA. Cannot bind NP without genomic RNA.</text>
</comment>
<comment type="subcellular location">
    <subcellularLocation>
        <location evidence="1">Virion membrane</location>
        <topology evidence="1">Peripheral membrane protein</topology>
        <orientation evidence="1">Cytoplasmic side</orientation>
    </subcellularLocation>
    <subcellularLocation>
        <location evidence="1">Host nucleus</location>
    </subcellularLocation>
</comment>
<comment type="alternative products">
    <event type="alternative splicing"/>
    <isoform>
        <id>Q67167-1</id>
        <name>M1</name>
        <sequence type="displayed"/>
    </isoform>
    <isoform>
        <id>Q67166-1</id>
        <name>M2</name>
        <sequence type="external"/>
    </isoform>
    <text>Only the first 9 residues are shared by the 2 isoforms.</text>
</comment>
<comment type="miscellaneous">
    <text evidence="1">Most abundant protein in virion. When expressed alone can form virus-like particles in transfected cells.</text>
</comment>
<comment type="similarity">
    <text evidence="1">Belongs to the influenza viruses Matrix protein M1 family.</text>
</comment>
<name>M1_I56A1</name>